<name>ASAP3_HUMAN</name>
<dbReference type="EMBL" id="AB056749">
    <property type="protein sequence ID" value="BAB85677.1"/>
    <property type="molecule type" value="mRNA"/>
</dbReference>
<dbReference type="EMBL" id="AK000206">
    <property type="protein sequence ID" value="BAA91008.1"/>
    <property type="molecule type" value="mRNA"/>
</dbReference>
<dbReference type="EMBL" id="AK092291">
    <property type="protein sequence ID" value="BAG52522.1"/>
    <property type="molecule type" value="mRNA"/>
</dbReference>
<dbReference type="EMBL" id="AK295100">
    <property type="protein sequence ID" value="BAG58136.1"/>
    <property type="molecule type" value="mRNA"/>
</dbReference>
<dbReference type="EMBL" id="AL021154">
    <property type="status" value="NOT_ANNOTATED_CDS"/>
    <property type="molecule type" value="Genomic_DNA"/>
</dbReference>
<dbReference type="EMBL" id="AL357134">
    <property type="status" value="NOT_ANNOTATED_CDS"/>
    <property type="molecule type" value="Genomic_DNA"/>
</dbReference>
<dbReference type="EMBL" id="CH471134">
    <property type="protein sequence ID" value="EAW95050.1"/>
    <property type="molecule type" value="Genomic_DNA"/>
</dbReference>
<dbReference type="EMBL" id="BC052305">
    <property type="protein sequence ID" value="AAH52305.1"/>
    <property type="molecule type" value="mRNA"/>
</dbReference>
<dbReference type="EMBL" id="BC060786">
    <property type="protein sequence ID" value="AAH60786.1"/>
    <property type="molecule type" value="mRNA"/>
</dbReference>
<dbReference type="CCDS" id="CCDS235.1">
    <molecule id="Q8TDY4-1"/>
</dbReference>
<dbReference type="CCDS" id="CCDS44087.1">
    <molecule id="Q8TDY4-3"/>
</dbReference>
<dbReference type="RefSeq" id="NP_001137250.1">
    <molecule id="Q8TDY4-3"/>
    <property type="nucleotide sequence ID" value="NM_001143778.2"/>
</dbReference>
<dbReference type="RefSeq" id="NP_060177.2">
    <molecule id="Q8TDY4-1"/>
    <property type="nucleotide sequence ID" value="NM_017707.3"/>
</dbReference>
<dbReference type="PDB" id="2B0O">
    <property type="method" value="X-ray"/>
    <property type="resolution" value="2.06 A"/>
    <property type="chains" value="E/F/G/H=416-697"/>
</dbReference>
<dbReference type="PDB" id="3LVQ">
    <property type="method" value="X-ray"/>
    <property type="resolution" value="3.38 A"/>
    <property type="chains" value="E=416-697"/>
</dbReference>
<dbReference type="PDB" id="3LVR">
    <property type="method" value="X-ray"/>
    <property type="resolution" value="3.38 A"/>
    <property type="chains" value="E=416-697"/>
</dbReference>
<dbReference type="PDBsum" id="2B0O"/>
<dbReference type="PDBsum" id="3LVQ"/>
<dbReference type="PDBsum" id="3LVR"/>
<dbReference type="SMR" id="Q8TDY4"/>
<dbReference type="BioGRID" id="120756">
    <property type="interactions" value="27"/>
</dbReference>
<dbReference type="FunCoup" id="Q8TDY4">
    <property type="interactions" value="447"/>
</dbReference>
<dbReference type="IntAct" id="Q8TDY4">
    <property type="interactions" value="18"/>
</dbReference>
<dbReference type="STRING" id="9606.ENSP00000338769"/>
<dbReference type="iPTMnet" id="Q8TDY4"/>
<dbReference type="PhosphoSitePlus" id="Q8TDY4"/>
<dbReference type="BioMuta" id="ASAP3"/>
<dbReference type="DMDM" id="74751433"/>
<dbReference type="jPOST" id="Q8TDY4"/>
<dbReference type="MassIVE" id="Q8TDY4"/>
<dbReference type="PaxDb" id="9606-ENSP00000338769"/>
<dbReference type="PeptideAtlas" id="Q8TDY4"/>
<dbReference type="ProteomicsDB" id="74371">
    <molecule id="Q8TDY4-1"/>
</dbReference>
<dbReference type="ProteomicsDB" id="74372">
    <molecule id="Q8TDY4-2"/>
</dbReference>
<dbReference type="ProteomicsDB" id="74373">
    <molecule id="Q8TDY4-3"/>
</dbReference>
<dbReference type="Pumba" id="Q8TDY4"/>
<dbReference type="Antibodypedia" id="30164">
    <property type="antibodies" value="158 antibodies from 24 providers"/>
</dbReference>
<dbReference type="DNASU" id="55616"/>
<dbReference type="Ensembl" id="ENST00000336689.8">
    <molecule id="Q8TDY4-1"/>
    <property type="protein sequence ID" value="ENSP00000338769.3"/>
    <property type="gene ID" value="ENSG00000088280.21"/>
</dbReference>
<dbReference type="Ensembl" id="ENST00000437606.6">
    <molecule id="Q8TDY4-3"/>
    <property type="protein sequence ID" value="ENSP00000408826.2"/>
    <property type="gene ID" value="ENSG00000088280.21"/>
</dbReference>
<dbReference type="Ensembl" id="ENST00000495646.5">
    <molecule id="Q8TDY4-2"/>
    <property type="protein sequence ID" value="ENSP00000436150.1"/>
    <property type="gene ID" value="ENSG00000088280.21"/>
</dbReference>
<dbReference type="Ensembl" id="ENST00000634513.1">
    <molecule id="Q8TDY4-2"/>
    <property type="protein sequence ID" value="ENSP00000488934.1"/>
    <property type="gene ID" value="ENSG00000282854.3"/>
</dbReference>
<dbReference type="Ensembl" id="ENST00000634561.2">
    <molecule id="Q8TDY4-1"/>
    <property type="protein sequence ID" value="ENSP00000488946.1"/>
    <property type="gene ID" value="ENSG00000282854.3"/>
</dbReference>
<dbReference type="Ensembl" id="ENST00000635198.1">
    <molecule id="Q8TDY4-3"/>
    <property type="protein sequence ID" value="ENSP00000488953.1"/>
    <property type="gene ID" value="ENSG00000282854.3"/>
</dbReference>
<dbReference type="GeneID" id="55616"/>
<dbReference type="KEGG" id="hsa:55616"/>
<dbReference type="MANE-Select" id="ENST00000336689.8">
    <property type="protein sequence ID" value="ENSP00000338769.3"/>
    <property type="RefSeq nucleotide sequence ID" value="NM_017707.4"/>
    <property type="RefSeq protein sequence ID" value="NP_060177.2"/>
</dbReference>
<dbReference type="UCSC" id="uc001bgy.1">
    <molecule id="Q8TDY4-1"/>
    <property type="organism name" value="human"/>
</dbReference>
<dbReference type="AGR" id="HGNC:14987"/>
<dbReference type="CTD" id="55616"/>
<dbReference type="DisGeNET" id="55616"/>
<dbReference type="GeneCards" id="ASAP3"/>
<dbReference type="HGNC" id="HGNC:14987">
    <property type="gene designation" value="ASAP3"/>
</dbReference>
<dbReference type="HPA" id="ENSG00000088280">
    <property type="expression patterns" value="Low tissue specificity"/>
</dbReference>
<dbReference type="MIM" id="616594">
    <property type="type" value="gene"/>
</dbReference>
<dbReference type="neXtProt" id="NX_Q8TDY4"/>
<dbReference type="OpenTargets" id="ENSG00000088280"/>
<dbReference type="PharmGKB" id="PA164716179"/>
<dbReference type="VEuPathDB" id="HostDB:ENSG00000088280"/>
<dbReference type="eggNOG" id="KOG0521">
    <property type="taxonomic scope" value="Eukaryota"/>
</dbReference>
<dbReference type="GeneTree" id="ENSGT00940000161085"/>
<dbReference type="HOGENOM" id="CLU_676064_0_0_1"/>
<dbReference type="InParanoid" id="Q8TDY4"/>
<dbReference type="OMA" id="IMEAQLP"/>
<dbReference type="OrthoDB" id="435430at2759"/>
<dbReference type="PAN-GO" id="Q8TDY4">
    <property type="GO annotations" value="5 GO annotations based on evolutionary models"/>
</dbReference>
<dbReference type="PhylomeDB" id="Q8TDY4"/>
<dbReference type="TreeFam" id="TF325156"/>
<dbReference type="PathwayCommons" id="Q8TDY4"/>
<dbReference type="SignaLink" id="Q8TDY4"/>
<dbReference type="SIGNOR" id="Q8TDY4"/>
<dbReference type="BioGRID-ORCS" id="55616">
    <property type="hits" value="15 hits in 1155 CRISPR screens"/>
</dbReference>
<dbReference type="ChiTaRS" id="ASAP3">
    <property type="organism name" value="human"/>
</dbReference>
<dbReference type="EvolutionaryTrace" id="Q8TDY4"/>
<dbReference type="GenomeRNAi" id="55616"/>
<dbReference type="Pharos" id="Q8TDY4">
    <property type="development level" value="Tbio"/>
</dbReference>
<dbReference type="PRO" id="PR:Q8TDY4"/>
<dbReference type="Proteomes" id="UP000005640">
    <property type="component" value="Chromosome 1"/>
</dbReference>
<dbReference type="RNAct" id="Q8TDY4">
    <property type="molecule type" value="protein"/>
</dbReference>
<dbReference type="Bgee" id="ENSG00000088280">
    <property type="expression patterns" value="Expressed in right ovary and 92 other cell types or tissues"/>
</dbReference>
<dbReference type="ExpressionAtlas" id="Q8TDY4">
    <property type="expression patterns" value="baseline and differential"/>
</dbReference>
<dbReference type="GO" id="GO:0005829">
    <property type="term" value="C:cytosol"/>
    <property type="evidence" value="ECO:0000314"/>
    <property type="project" value="HPA"/>
</dbReference>
<dbReference type="GO" id="GO:0005925">
    <property type="term" value="C:focal adhesion"/>
    <property type="evidence" value="ECO:0000314"/>
    <property type="project" value="UniProtKB"/>
</dbReference>
<dbReference type="GO" id="GO:0043231">
    <property type="term" value="C:intracellular membrane-bounded organelle"/>
    <property type="evidence" value="ECO:0000314"/>
    <property type="project" value="HPA"/>
</dbReference>
<dbReference type="GO" id="GO:0005654">
    <property type="term" value="C:nucleoplasm"/>
    <property type="evidence" value="ECO:0000314"/>
    <property type="project" value="HPA"/>
</dbReference>
<dbReference type="GO" id="GO:0001726">
    <property type="term" value="C:ruffle"/>
    <property type="evidence" value="ECO:0000314"/>
    <property type="project" value="UniProtKB"/>
</dbReference>
<dbReference type="GO" id="GO:0005096">
    <property type="term" value="F:GTPase activator activity"/>
    <property type="evidence" value="ECO:0000314"/>
    <property type="project" value="UniProtKB"/>
</dbReference>
<dbReference type="GO" id="GO:0008270">
    <property type="term" value="F:zinc ion binding"/>
    <property type="evidence" value="ECO:0007669"/>
    <property type="project" value="UniProtKB-KW"/>
</dbReference>
<dbReference type="GO" id="GO:0016477">
    <property type="term" value="P:cell migration"/>
    <property type="evidence" value="ECO:0000315"/>
    <property type="project" value="UniProtKB"/>
</dbReference>
<dbReference type="GO" id="GO:0043547">
    <property type="term" value="P:positive regulation of GTPase activity"/>
    <property type="evidence" value="ECO:0000314"/>
    <property type="project" value="UniProtKB"/>
</dbReference>
<dbReference type="GO" id="GO:0051492">
    <property type="term" value="P:regulation of stress fiber assembly"/>
    <property type="evidence" value="ECO:0000315"/>
    <property type="project" value="UniProtKB"/>
</dbReference>
<dbReference type="CDD" id="cd17900">
    <property type="entry name" value="ArfGap_ASAP3"/>
    <property type="match status" value="1"/>
</dbReference>
<dbReference type="CDD" id="cd07640">
    <property type="entry name" value="BAR_ASAP3"/>
    <property type="match status" value="1"/>
</dbReference>
<dbReference type="CDD" id="cd13251">
    <property type="entry name" value="PH_ASAP"/>
    <property type="match status" value="1"/>
</dbReference>
<dbReference type="FunFam" id="1.10.220.150:FF:000002">
    <property type="entry name" value="arf-GAP with SH3 domain, ANK repeat and PH domain-containing protein 1"/>
    <property type="match status" value="1"/>
</dbReference>
<dbReference type="FunFam" id="1.25.40.20:FF:000006">
    <property type="entry name" value="Arf-GAP with SH3 domain, ANK repeat and PH domain-containing protein 2"/>
    <property type="match status" value="1"/>
</dbReference>
<dbReference type="FunFam" id="2.30.29.30:FF:000012">
    <property type="entry name" value="Arf-GAP with SH3 domain, ANK repeat and PH domain-containing protein 2"/>
    <property type="match status" value="1"/>
</dbReference>
<dbReference type="FunFam" id="1.20.1270.60:FF:000036">
    <property type="entry name" value="Arf-GAP with SH3 domain, ANK repeat and PH domain-containing protein 3"/>
    <property type="match status" value="1"/>
</dbReference>
<dbReference type="FunFam" id="1.25.40.950:FF:000002">
    <property type="entry name" value="Arf-GAP with SH3 domain, ANK repeat and PH domain-containing protein 3"/>
    <property type="match status" value="1"/>
</dbReference>
<dbReference type="Gene3D" id="1.25.40.950">
    <property type="match status" value="1"/>
</dbReference>
<dbReference type="Gene3D" id="1.25.40.20">
    <property type="entry name" value="Ankyrin repeat-containing domain"/>
    <property type="match status" value="1"/>
</dbReference>
<dbReference type="Gene3D" id="1.10.220.150">
    <property type="entry name" value="Arf GTPase activating protein"/>
    <property type="match status" value="1"/>
</dbReference>
<dbReference type="Gene3D" id="1.20.1270.60">
    <property type="entry name" value="Arfaptin homology (AH) domain/BAR domain"/>
    <property type="match status" value="1"/>
</dbReference>
<dbReference type="Gene3D" id="2.30.29.30">
    <property type="entry name" value="Pleckstrin-homology domain (PH domain)/Phosphotyrosine-binding domain (PTB)"/>
    <property type="match status" value="1"/>
</dbReference>
<dbReference type="InterPro" id="IPR027267">
    <property type="entry name" value="AH/BAR_dom_sf"/>
</dbReference>
<dbReference type="InterPro" id="IPR002110">
    <property type="entry name" value="Ankyrin_rpt"/>
</dbReference>
<dbReference type="InterPro" id="IPR036770">
    <property type="entry name" value="Ankyrin_rpt-contain_sf"/>
</dbReference>
<dbReference type="InterPro" id="IPR037278">
    <property type="entry name" value="ARFGAP/RecO"/>
</dbReference>
<dbReference type="InterPro" id="IPR001164">
    <property type="entry name" value="ArfGAP_dom"/>
</dbReference>
<dbReference type="InterPro" id="IPR038508">
    <property type="entry name" value="ArfGAP_dom_sf"/>
</dbReference>
<dbReference type="InterPro" id="IPR043593">
    <property type="entry name" value="ASAP"/>
</dbReference>
<dbReference type="InterPro" id="IPR047006">
    <property type="entry name" value="ASAP3_ArfGap"/>
</dbReference>
<dbReference type="InterPro" id="IPR028775">
    <property type="entry name" value="BAR_ASAP3"/>
</dbReference>
<dbReference type="InterPro" id="IPR004148">
    <property type="entry name" value="BAR_dom"/>
</dbReference>
<dbReference type="InterPro" id="IPR011993">
    <property type="entry name" value="PH-like_dom_sf"/>
</dbReference>
<dbReference type="InterPro" id="IPR037844">
    <property type="entry name" value="PH_ASAP"/>
</dbReference>
<dbReference type="InterPro" id="IPR001849">
    <property type="entry name" value="PH_domain"/>
</dbReference>
<dbReference type="PANTHER" id="PTHR45854:SF1">
    <property type="entry name" value="ARF-GAP WITH SH3 DOMAIN, ANK REPEAT AND PH DOMAIN-CONTAINING PROTEIN 3"/>
    <property type="match status" value="1"/>
</dbReference>
<dbReference type="PANTHER" id="PTHR45854">
    <property type="entry name" value="ASAP FAMILY MEMBER"/>
    <property type="match status" value="1"/>
</dbReference>
<dbReference type="Pfam" id="PF12796">
    <property type="entry name" value="Ank_2"/>
    <property type="match status" value="1"/>
</dbReference>
<dbReference type="Pfam" id="PF01412">
    <property type="entry name" value="ArfGap"/>
    <property type="match status" value="1"/>
</dbReference>
<dbReference type="Pfam" id="PF16746">
    <property type="entry name" value="BAR_3"/>
    <property type="match status" value="1"/>
</dbReference>
<dbReference type="Pfam" id="PF00169">
    <property type="entry name" value="PH"/>
    <property type="match status" value="1"/>
</dbReference>
<dbReference type="PRINTS" id="PR00405">
    <property type="entry name" value="REVINTRACTNG"/>
</dbReference>
<dbReference type="SMART" id="SM00248">
    <property type="entry name" value="ANK"/>
    <property type="match status" value="2"/>
</dbReference>
<dbReference type="SMART" id="SM00105">
    <property type="entry name" value="ArfGap"/>
    <property type="match status" value="1"/>
</dbReference>
<dbReference type="SMART" id="SM00233">
    <property type="entry name" value="PH"/>
    <property type="match status" value="1"/>
</dbReference>
<dbReference type="SUPFAM" id="SSF48403">
    <property type="entry name" value="Ankyrin repeat"/>
    <property type="match status" value="1"/>
</dbReference>
<dbReference type="SUPFAM" id="SSF57863">
    <property type="entry name" value="ArfGap/RecO-like zinc finger"/>
    <property type="match status" value="1"/>
</dbReference>
<dbReference type="SUPFAM" id="SSF103657">
    <property type="entry name" value="BAR/IMD domain-like"/>
    <property type="match status" value="1"/>
</dbReference>
<dbReference type="SUPFAM" id="SSF50729">
    <property type="entry name" value="PH domain-like"/>
    <property type="match status" value="1"/>
</dbReference>
<dbReference type="PROSITE" id="PS50297">
    <property type="entry name" value="ANK_REP_REGION"/>
    <property type="match status" value="1"/>
</dbReference>
<dbReference type="PROSITE" id="PS50088">
    <property type="entry name" value="ANK_REPEAT"/>
    <property type="match status" value="1"/>
</dbReference>
<dbReference type="PROSITE" id="PS50115">
    <property type="entry name" value="ARFGAP"/>
    <property type="match status" value="1"/>
</dbReference>
<dbReference type="PROSITE" id="PS50003">
    <property type="entry name" value="PH_DOMAIN"/>
    <property type="match status" value="1"/>
</dbReference>
<feature type="chain" id="PRO_0000232887" description="Arf-GAP with SH3 domain, ANK repeat and PH domain-containing protein 3">
    <location>
        <begin position="1"/>
        <end position="903"/>
    </location>
</feature>
<feature type="domain" description="PH" evidence="2">
    <location>
        <begin position="302"/>
        <end position="394"/>
    </location>
</feature>
<feature type="domain" description="Arf-GAP" evidence="3">
    <location>
        <begin position="426"/>
        <end position="551"/>
    </location>
</feature>
<feature type="repeat" description="ANK 1">
    <location>
        <begin position="585"/>
        <end position="617"/>
    </location>
</feature>
<feature type="repeat" description="ANK 2">
    <location>
        <begin position="621"/>
        <end position="650"/>
    </location>
</feature>
<feature type="zinc finger region" description="C4-type" evidence="3">
    <location>
        <begin position="441"/>
        <end position="464"/>
    </location>
</feature>
<feature type="region of interest" description="Disordered" evidence="4">
    <location>
        <begin position="740"/>
        <end position="903"/>
    </location>
</feature>
<feature type="coiled-coil region" evidence="1">
    <location>
        <begin position="141"/>
        <end position="172"/>
    </location>
</feature>
<feature type="coiled-coil region" evidence="1">
    <location>
        <begin position="248"/>
        <end position="275"/>
    </location>
</feature>
<feature type="compositionally biased region" description="Low complexity" evidence="4">
    <location>
        <begin position="790"/>
        <end position="809"/>
    </location>
</feature>
<feature type="compositionally biased region" description="Polar residues" evidence="4">
    <location>
        <begin position="829"/>
        <end position="840"/>
    </location>
</feature>
<feature type="compositionally biased region" description="Polar residues" evidence="4">
    <location>
        <begin position="889"/>
        <end position="903"/>
    </location>
</feature>
<feature type="splice variant" id="VSP_018013" description="In isoform 2." evidence="7">
    <location>
        <begin position="1"/>
        <end position="496"/>
    </location>
</feature>
<feature type="splice variant" id="VSP_039827" description="In isoform 3." evidence="7">
    <original>DSKKQLEKAWKDYEAKM</original>
    <variation>ASLSLGSR</variation>
    <location>
        <begin position="142"/>
        <end position="158"/>
    </location>
</feature>
<feature type="sequence variant" id="VAR_048295" description="In dbSNP:rs16828486.">
    <original>E</original>
    <variation>A</variation>
    <location>
        <position position="377"/>
    </location>
</feature>
<feature type="sequence variant" id="VAR_035612" description="In a colorectal cancer sample; somatic mutation." evidence="6">
    <original>A</original>
    <variation>T</variation>
    <location>
        <position position="617"/>
    </location>
</feature>
<feature type="sequence conflict" description="In Ref. 5; AAH60786." evidence="8" ref="5">
    <original>V</original>
    <variation>A</variation>
    <location>
        <position position="319"/>
    </location>
</feature>
<feature type="sequence conflict" description="In Ref. 2; BAA91008." evidence="8" ref="2">
    <original>E</original>
    <variation>G</variation>
    <location>
        <position position="521"/>
    </location>
</feature>
<feature type="sequence conflict" description="In Ref. 2; BAA91008." evidence="8" ref="2">
    <original>V</original>
    <variation>D</variation>
    <location>
        <position position="596"/>
    </location>
</feature>
<feature type="sequence conflict" description="In Ref. 2; BAA91008." evidence="8" ref="2">
    <original>L</original>
    <variation>V</variation>
    <location>
        <position position="802"/>
    </location>
</feature>
<feature type="helix" evidence="9">
    <location>
        <begin position="424"/>
        <end position="433"/>
    </location>
</feature>
<feature type="turn" evidence="9">
    <location>
        <begin position="436"/>
        <end position="439"/>
    </location>
</feature>
<feature type="turn" evidence="9">
    <location>
        <begin position="442"/>
        <end position="444"/>
    </location>
</feature>
<feature type="strand" evidence="9">
    <location>
        <begin position="451"/>
        <end position="453"/>
    </location>
</feature>
<feature type="turn" evidence="9">
    <location>
        <begin position="454"/>
        <end position="456"/>
    </location>
</feature>
<feature type="helix" evidence="9">
    <location>
        <begin position="462"/>
        <end position="471"/>
    </location>
</feature>
<feature type="turn" evidence="9">
    <location>
        <begin position="473"/>
        <end position="475"/>
    </location>
</feature>
<feature type="strand" evidence="9">
    <location>
        <begin position="478"/>
        <end position="480"/>
    </location>
</feature>
<feature type="turn" evidence="9">
    <location>
        <begin position="481"/>
        <end position="483"/>
    </location>
</feature>
<feature type="helix" evidence="9">
    <location>
        <begin position="488"/>
        <end position="496"/>
    </location>
</feature>
<feature type="helix" evidence="9">
    <location>
        <begin position="499"/>
        <end position="506"/>
    </location>
</feature>
<feature type="turn" evidence="9">
    <location>
        <begin position="507"/>
        <end position="509"/>
    </location>
</feature>
<feature type="strand" evidence="9">
    <location>
        <begin position="512"/>
        <end position="514"/>
    </location>
</feature>
<feature type="helix" evidence="9">
    <location>
        <begin position="524"/>
        <end position="535"/>
    </location>
</feature>
<feature type="helix" evidence="9">
    <location>
        <begin position="548"/>
        <end position="556"/>
    </location>
</feature>
<feature type="helix" evidence="9">
    <location>
        <begin position="560"/>
        <end position="568"/>
    </location>
</feature>
<feature type="strand" evidence="10">
    <location>
        <begin position="573"/>
        <end position="575"/>
    </location>
</feature>
<feature type="strand" evidence="9">
    <location>
        <begin position="580"/>
        <end position="582"/>
    </location>
</feature>
<feature type="helix" evidence="9">
    <location>
        <begin position="589"/>
        <end position="595"/>
    </location>
</feature>
<feature type="turn" evidence="9">
    <location>
        <begin position="599"/>
        <end position="601"/>
    </location>
</feature>
<feature type="helix" evidence="9">
    <location>
        <begin position="602"/>
        <end position="611"/>
    </location>
</feature>
<feature type="strand" evidence="10">
    <location>
        <begin position="620"/>
        <end position="622"/>
    </location>
</feature>
<feature type="helix" evidence="9">
    <location>
        <begin position="625"/>
        <end position="631"/>
    </location>
</feature>
<feature type="helix" evidence="9">
    <location>
        <begin position="635"/>
        <end position="643"/>
    </location>
</feature>
<feature type="helix" evidence="9">
    <location>
        <begin position="658"/>
        <end position="665"/>
    </location>
</feature>
<feature type="helix" evidence="9">
    <location>
        <begin position="668"/>
        <end position="680"/>
    </location>
</feature>
<feature type="helix" evidence="9">
    <location>
        <begin position="690"/>
        <end position="696"/>
    </location>
</feature>
<protein>
    <recommendedName>
        <fullName>Arf-GAP with SH3 domain, ANK repeat and PH domain-containing protein 3</fullName>
    </recommendedName>
    <alternativeName>
        <fullName>Development and differentiation-enhancing factor-like 1</fullName>
    </alternativeName>
    <alternativeName>
        <fullName>Protein up-regulated in liver cancer 1</fullName>
    </alternativeName>
</protein>
<accession>Q8TDY4</accession>
<accession>B3KRW0</accession>
<accession>B4DHH4</accession>
<accession>Q6P9F4</accession>
<accession>Q86UY1</accession>
<accession>Q9NXK2</accession>
<keyword id="KW-0002">3D-structure</keyword>
<keyword id="KW-0025">Alternative splicing</keyword>
<keyword id="KW-0040">ANK repeat</keyword>
<keyword id="KW-0175">Coiled coil</keyword>
<keyword id="KW-0963">Cytoplasm</keyword>
<keyword id="KW-0479">Metal-binding</keyword>
<keyword id="KW-1267">Proteomics identification</keyword>
<keyword id="KW-1185">Reference proteome</keyword>
<keyword id="KW-0677">Repeat</keyword>
<keyword id="KW-0862">Zinc</keyword>
<keyword id="KW-0863">Zinc-finger</keyword>
<evidence type="ECO:0000255" key="1"/>
<evidence type="ECO:0000255" key="2">
    <source>
        <dbReference type="PROSITE-ProRule" id="PRU00145"/>
    </source>
</evidence>
<evidence type="ECO:0000255" key="3">
    <source>
        <dbReference type="PROSITE-ProRule" id="PRU00288"/>
    </source>
</evidence>
<evidence type="ECO:0000256" key="4">
    <source>
        <dbReference type="SAM" id="MobiDB-lite"/>
    </source>
</evidence>
<evidence type="ECO:0000269" key="5">
    <source>
    </source>
</evidence>
<evidence type="ECO:0000269" key="6">
    <source>
    </source>
</evidence>
<evidence type="ECO:0000303" key="7">
    <source>
    </source>
</evidence>
<evidence type="ECO:0000305" key="8"/>
<evidence type="ECO:0007829" key="9">
    <source>
        <dbReference type="PDB" id="2B0O"/>
    </source>
</evidence>
<evidence type="ECO:0007829" key="10">
    <source>
        <dbReference type="PDB" id="3LVQ"/>
    </source>
</evidence>
<reference key="1">
    <citation type="journal article" date="2004" name="Int. J. Oncol.">
        <title>Isolation of development and differentiation enhancing factor-like 1 (DDEFL1) as a drug target for hepatocellular carcinomas.</title>
        <authorList>
            <person name="Okabe H."/>
            <person name="Furukawa Y."/>
            <person name="Kato T."/>
            <person name="Hasegawa S."/>
            <person name="Yamaoka Y."/>
            <person name="Nakamura Y."/>
        </authorList>
    </citation>
    <scope>NUCLEOTIDE SEQUENCE [MRNA] (ISOFORM 1)</scope>
    <scope>FUNCTION</scope>
    <scope>SUBCELLULAR LOCATION</scope>
    <scope>TISSUE SPECIFICITY</scope>
    <source>
        <tissue>Liver</tissue>
    </source>
</reference>
<reference key="2">
    <citation type="journal article" date="2004" name="Nat. Genet.">
        <title>Complete sequencing and characterization of 21,243 full-length human cDNAs.</title>
        <authorList>
            <person name="Ota T."/>
            <person name="Suzuki Y."/>
            <person name="Nishikawa T."/>
            <person name="Otsuki T."/>
            <person name="Sugiyama T."/>
            <person name="Irie R."/>
            <person name="Wakamatsu A."/>
            <person name="Hayashi K."/>
            <person name="Sato H."/>
            <person name="Nagai K."/>
            <person name="Kimura K."/>
            <person name="Makita H."/>
            <person name="Sekine M."/>
            <person name="Obayashi M."/>
            <person name="Nishi T."/>
            <person name="Shibahara T."/>
            <person name="Tanaka T."/>
            <person name="Ishii S."/>
            <person name="Yamamoto J."/>
            <person name="Saito K."/>
            <person name="Kawai Y."/>
            <person name="Isono Y."/>
            <person name="Nakamura Y."/>
            <person name="Nagahari K."/>
            <person name="Murakami K."/>
            <person name="Yasuda T."/>
            <person name="Iwayanagi T."/>
            <person name="Wagatsuma M."/>
            <person name="Shiratori A."/>
            <person name="Sudo H."/>
            <person name="Hosoiri T."/>
            <person name="Kaku Y."/>
            <person name="Kodaira H."/>
            <person name="Kondo H."/>
            <person name="Sugawara M."/>
            <person name="Takahashi M."/>
            <person name="Kanda K."/>
            <person name="Yokoi T."/>
            <person name="Furuya T."/>
            <person name="Kikkawa E."/>
            <person name="Omura Y."/>
            <person name="Abe K."/>
            <person name="Kamihara K."/>
            <person name="Katsuta N."/>
            <person name="Sato K."/>
            <person name="Tanikawa M."/>
            <person name="Yamazaki M."/>
            <person name="Ninomiya K."/>
            <person name="Ishibashi T."/>
            <person name="Yamashita H."/>
            <person name="Murakawa K."/>
            <person name="Fujimori K."/>
            <person name="Tanai H."/>
            <person name="Kimata M."/>
            <person name="Watanabe M."/>
            <person name="Hiraoka S."/>
            <person name="Chiba Y."/>
            <person name="Ishida S."/>
            <person name="Ono Y."/>
            <person name="Takiguchi S."/>
            <person name="Watanabe S."/>
            <person name="Yosida M."/>
            <person name="Hotuta T."/>
            <person name="Kusano J."/>
            <person name="Kanehori K."/>
            <person name="Takahashi-Fujii A."/>
            <person name="Hara H."/>
            <person name="Tanase T.-O."/>
            <person name="Nomura Y."/>
            <person name="Togiya S."/>
            <person name="Komai F."/>
            <person name="Hara R."/>
            <person name="Takeuchi K."/>
            <person name="Arita M."/>
            <person name="Imose N."/>
            <person name="Musashino K."/>
            <person name="Yuuki H."/>
            <person name="Oshima A."/>
            <person name="Sasaki N."/>
            <person name="Aotsuka S."/>
            <person name="Yoshikawa Y."/>
            <person name="Matsunawa H."/>
            <person name="Ichihara T."/>
            <person name="Shiohata N."/>
            <person name="Sano S."/>
            <person name="Moriya S."/>
            <person name="Momiyama H."/>
            <person name="Satoh N."/>
            <person name="Takami S."/>
            <person name="Terashima Y."/>
            <person name="Suzuki O."/>
            <person name="Nakagawa S."/>
            <person name="Senoh A."/>
            <person name="Mizoguchi H."/>
            <person name="Goto Y."/>
            <person name="Shimizu F."/>
            <person name="Wakebe H."/>
            <person name="Hishigaki H."/>
            <person name="Watanabe T."/>
            <person name="Sugiyama A."/>
            <person name="Takemoto M."/>
            <person name="Kawakami B."/>
            <person name="Yamazaki M."/>
            <person name="Watanabe K."/>
            <person name="Kumagai A."/>
            <person name="Itakura S."/>
            <person name="Fukuzumi Y."/>
            <person name="Fujimori Y."/>
            <person name="Komiyama M."/>
            <person name="Tashiro H."/>
            <person name="Tanigami A."/>
            <person name="Fujiwara T."/>
            <person name="Ono T."/>
            <person name="Yamada K."/>
            <person name="Fujii Y."/>
            <person name="Ozaki K."/>
            <person name="Hirao M."/>
            <person name="Ohmori Y."/>
            <person name="Kawabata A."/>
            <person name="Hikiji T."/>
            <person name="Kobatake N."/>
            <person name="Inagaki H."/>
            <person name="Ikema Y."/>
            <person name="Okamoto S."/>
            <person name="Okitani R."/>
            <person name="Kawakami T."/>
            <person name="Noguchi S."/>
            <person name="Itoh T."/>
            <person name="Shigeta K."/>
            <person name="Senba T."/>
            <person name="Matsumura K."/>
            <person name="Nakajima Y."/>
            <person name="Mizuno T."/>
            <person name="Morinaga M."/>
            <person name="Sasaki M."/>
            <person name="Togashi T."/>
            <person name="Oyama M."/>
            <person name="Hata H."/>
            <person name="Watanabe M."/>
            <person name="Komatsu T."/>
            <person name="Mizushima-Sugano J."/>
            <person name="Satoh T."/>
            <person name="Shirai Y."/>
            <person name="Takahashi Y."/>
            <person name="Nakagawa K."/>
            <person name="Okumura K."/>
            <person name="Nagase T."/>
            <person name="Nomura N."/>
            <person name="Kikuchi H."/>
            <person name="Masuho Y."/>
            <person name="Yamashita R."/>
            <person name="Nakai K."/>
            <person name="Yada T."/>
            <person name="Nakamura Y."/>
            <person name="Ohara O."/>
            <person name="Isogai T."/>
            <person name="Sugano S."/>
        </authorList>
    </citation>
    <scope>NUCLEOTIDE SEQUENCE [LARGE SCALE MRNA] (ISOFORMS 1; 2 AND 3)</scope>
    <source>
        <tissue>Brain</tissue>
        <tissue>Colon mucosa</tissue>
        <tissue>Tongue</tissue>
    </source>
</reference>
<reference key="3">
    <citation type="journal article" date="2006" name="Nature">
        <title>The DNA sequence and biological annotation of human chromosome 1.</title>
        <authorList>
            <person name="Gregory S.G."/>
            <person name="Barlow K.F."/>
            <person name="McLay K.E."/>
            <person name="Kaul R."/>
            <person name="Swarbreck D."/>
            <person name="Dunham A."/>
            <person name="Scott C.E."/>
            <person name="Howe K.L."/>
            <person name="Woodfine K."/>
            <person name="Spencer C.C.A."/>
            <person name="Jones M.C."/>
            <person name="Gillson C."/>
            <person name="Searle S."/>
            <person name="Zhou Y."/>
            <person name="Kokocinski F."/>
            <person name="McDonald L."/>
            <person name="Evans R."/>
            <person name="Phillips K."/>
            <person name="Atkinson A."/>
            <person name="Cooper R."/>
            <person name="Jones C."/>
            <person name="Hall R.E."/>
            <person name="Andrews T.D."/>
            <person name="Lloyd C."/>
            <person name="Ainscough R."/>
            <person name="Almeida J.P."/>
            <person name="Ambrose K.D."/>
            <person name="Anderson F."/>
            <person name="Andrew R.W."/>
            <person name="Ashwell R.I.S."/>
            <person name="Aubin K."/>
            <person name="Babbage A.K."/>
            <person name="Bagguley C.L."/>
            <person name="Bailey J."/>
            <person name="Beasley H."/>
            <person name="Bethel G."/>
            <person name="Bird C.P."/>
            <person name="Bray-Allen S."/>
            <person name="Brown J.Y."/>
            <person name="Brown A.J."/>
            <person name="Buckley D."/>
            <person name="Burton J."/>
            <person name="Bye J."/>
            <person name="Carder C."/>
            <person name="Chapman J.C."/>
            <person name="Clark S.Y."/>
            <person name="Clarke G."/>
            <person name="Clee C."/>
            <person name="Cobley V."/>
            <person name="Collier R.E."/>
            <person name="Corby N."/>
            <person name="Coville G.J."/>
            <person name="Davies J."/>
            <person name="Deadman R."/>
            <person name="Dunn M."/>
            <person name="Earthrowl M."/>
            <person name="Ellington A.G."/>
            <person name="Errington H."/>
            <person name="Frankish A."/>
            <person name="Frankland J."/>
            <person name="French L."/>
            <person name="Garner P."/>
            <person name="Garnett J."/>
            <person name="Gay L."/>
            <person name="Ghori M.R.J."/>
            <person name="Gibson R."/>
            <person name="Gilby L.M."/>
            <person name="Gillett W."/>
            <person name="Glithero R.J."/>
            <person name="Grafham D.V."/>
            <person name="Griffiths C."/>
            <person name="Griffiths-Jones S."/>
            <person name="Grocock R."/>
            <person name="Hammond S."/>
            <person name="Harrison E.S.I."/>
            <person name="Hart E."/>
            <person name="Haugen E."/>
            <person name="Heath P.D."/>
            <person name="Holmes S."/>
            <person name="Holt K."/>
            <person name="Howden P.J."/>
            <person name="Hunt A.R."/>
            <person name="Hunt S.E."/>
            <person name="Hunter G."/>
            <person name="Isherwood J."/>
            <person name="James R."/>
            <person name="Johnson C."/>
            <person name="Johnson D."/>
            <person name="Joy A."/>
            <person name="Kay M."/>
            <person name="Kershaw J.K."/>
            <person name="Kibukawa M."/>
            <person name="Kimberley A.M."/>
            <person name="King A."/>
            <person name="Knights A.J."/>
            <person name="Lad H."/>
            <person name="Laird G."/>
            <person name="Lawlor S."/>
            <person name="Leongamornlert D.A."/>
            <person name="Lloyd D.M."/>
            <person name="Loveland J."/>
            <person name="Lovell J."/>
            <person name="Lush M.J."/>
            <person name="Lyne R."/>
            <person name="Martin S."/>
            <person name="Mashreghi-Mohammadi M."/>
            <person name="Matthews L."/>
            <person name="Matthews N.S.W."/>
            <person name="McLaren S."/>
            <person name="Milne S."/>
            <person name="Mistry S."/>
            <person name="Moore M.J.F."/>
            <person name="Nickerson T."/>
            <person name="O'Dell C.N."/>
            <person name="Oliver K."/>
            <person name="Palmeiri A."/>
            <person name="Palmer S.A."/>
            <person name="Parker A."/>
            <person name="Patel D."/>
            <person name="Pearce A.V."/>
            <person name="Peck A.I."/>
            <person name="Pelan S."/>
            <person name="Phelps K."/>
            <person name="Phillimore B.J."/>
            <person name="Plumb R."/>
            <person name="Rajan J."/>
            <person name="Raymond C."/>
            <person name="Rouse G."/>
            <person name="Saenphimmachak C."/>
            <person name="Sehra H.K."/>
            <person name="Sheridan E."/>
            <person name="Shownkeen R."/>
            <person name="Sims S."/>
            <person name="Skuce C.D."/>
            <person name="Smith M."/>
            <person name="Steward C."/>
            <person name="Subramanian S."/>
            <person name="Sycamore N."/>
            <person name="Tracey A."/>
            <person name="Tromans A."/>
            <person name="Van Helmond Z."/>
            <person name="Wall M."/>
            <person name="Wallis J.M."/>
            <person name="White S."/>
            <person name="Whitehead S.L."/>
            <person name="Wilkinson J.E."/>
            <person name="Willey D.L."/>
            <person name="Williams H."/>
            <person name="Wilming L."/>
            <person name="Wray P.W."/>
            <person name="Wu Z."/>
            <person name="Coulson A."/>
            <person name="Vaudin M."/>
            <person name="Sulston J.E."/>
            <person name="Durbin R.M."/>
            <person name="Hubbard T."/>
            <person name="Wooster R."/>
            <person name="Dunham I."/>
            <person name="Carter N.P."/>
            <person name="McVean G."/>
            <person name="Ross M.T."/>
            <person name="Harrow J."/>
            <person name="Olson M.V."/>
            <person name="Beck S."/>
            <person name="Rogers J."/>
            <person name="Bentley D.R."/>
        </authorList>
    </citation>
    <scope>NUCLEOTIDE SEQUENCE [LARGE SCALE GENOMIC DNA]</scope>
</reference>
<reference key="4">
    <citation type="submission" date="2005-07" db="EMBL/GenBank/DDBJ databases">
        <authorList>
            <person name="Mural R.J."/>
            <person name="Istrail S."/>
            <person name="Sutton G.G."/>
            <person name="Florea L."/>
            <person name="Halpern A.L."/>
            <person name="Mobarry C.M."/>
            <person name="Lippert R."/>
            <person name="Walenz B."/>
            <person name="Shatkay H."/>
            <person name="Dew I."/>
            <person name="Miller J.R."/>
            <person name="Flanigan M.J."/>
            <person name="Edwards N.J."/>
            <person name="Bolanos R."/>
            <person name="Fasulo D."/>
            <person name="Halldorsson B.V."/>
            <person name="Hannenhalli S."/>
            <person name="Turner R."/>
            <person name="Yooseph S."/>
            <person name="Lu F."/>
            <person name="Nusskern D.R."/>
            <person name="Shue B.C."/>
            <person name="Zheng X.H."/>
            <person name="Zhong F."/>
            <person name="Delcher A.L."/>
            <person name="Huson D.H."/>
            <person name="Kravitz S.A."/>
            <person name="Mouchard L."/>
            <person name="Reinert K."/>
            <person name="Remington K.A."/>
            <person name="Clark A.G."/>
            <person name="Waterman M.S."/>
            <person name="Eichler E.E."/>
            <person name="Adams M.D."/>
            <person name="Hunkapiller M.W."/>
            <person name="Myers E.W."/>
            <person name="Venter J.C."/>
        </authorList>
    </citation>
    <scope>NUCLEOTIDE SEQUENCE [LARGE SCALE GENOMIC DNA]</scope>
</reference>
<reference key="5">
    <citation type="journal article" date="2004" name="Genome Res.">
        <title>The status, quality, and expansion of the NIH full-length cDNA project: the Mammalian Gene Collection (MGC).</title>
        <authorList>
            <consortium name="The MGC Project Team"/>
        </authorList>
    </citation>
    <scope>NUCLEOTIDE SEQUENCE [LARGE SCALE MRNA] (ISOFORM 1)</scope>
    <source>
        <tissue>Brain</tissue>
        <tissue>Testis</tissue>
    </source>
</reference>
<reference key="6">
    <citation type="submission" date="2005-09" db="PDB data bank">
        <title>Structural analysis of gap and ankyrin domains of UPLC1.</title>
        <authorList>
            <consortium name="Structural genomics consortium (SGC)"/>
        </authorList>
    </citation>
    <scope>X-RAY CRYSTALLOGRAPHY (2.06 ANGSTROMS) OF 416-697 IN COMPLEX WITH ZINC IONS</scope>
</reference>
<reference key="7">
    <citation type="journal article" date="2006" name="Science">
        <title>The consensus coding sequences of human breast and colorectal cancers.</title>
        <authorList>
            <person name="Sjoeblom T."/>
            <person name="Jones S."/>
            <person name="Wood L.D."/>
            <person name="Parsons D.W."/>
            <person name="Lin J."/>
            <person name="Barber T.D."/>
            <person name="Mandelker D."/>
            <person name="Leary R.J."/>
            <person name="Ptak J."/>
            <person name="Silliman N."/>
            <person name="Szabo S."/>
            <person name="Buckhaults P."/>
            <person name="Farrell C."/>
            <person name="Meeh P."/>
            <person name="Markowitz S.D."/>
            <person name="Willis J."/>
            <person name="Dawson D."/>
            <person name="Willson J.K.V."/>
            <person name="Gazdar A.F."/>
            <person name="Hartigan J."/>
            <person name="Wu L."/>
            <person name="Liu C."/>
            <person name="Parmigiani G."/>
            <person name="Park B.H."/>
            <person name="Bachman K.E."/>
            <person name="Papadopoulos N."/>
            <person name="Vogelstein B."/>
            <person name="Kinzler K.W."/>
            <person name="Velculescu V.E."/>
        </authorList>
    </citation>
    <scope>VARIANT [LARGE SCALE ANALYSIS] THR-617</scope>
</reference>
<sequence length="903" mass="99155">MPEQFSVAEFLAVTAEDLSSPAGAAAFAAKMPRYRGAALAREEILEGDQAILQRIKKAVRAIHSSGLGHVENEEQYREAVESLGNSHLSQNSHELSTGFLNLAVFTREVAALFKNLIQNLNNIVSFPLDSLMKGQLRDGRQDSKKQLEKAWKDYEAKMAKLEKERDRARVTGGIPGEVAQDMQRERRIFQLHMCEYLLKAGESQMKQGPDFLQSLIKFFHAQHNFFQDGWKAAQSLFPFIEKLAASVHALHQAQEDELQKLTQLRDSLRGTLQLESREEHLSRKNSGCGYSIHQHQGNKQFGTEKVGFLYKKSDGIRRVWQKRKCGVKYGCLTISHSTINRPPVKLTLLTCQVRPNPEEKKCFDLVTHNRTYHFQAEDEHECEAWVSVLQNSKDEALSSAFLGEPSAGPGSWGSAGHDGEPHDLTKLLIAEVKSRPGNSQCCDCGAADPTWLSTNLGVLTCIQCSGVHRELGVRFSRMQSLTLDLLGPSELLLALNMGNTSFNEVMEAQLPSHGGPKPSAESDMGTRRDYIMAKYVEHRFARRCTPEPQRLWTAICNRDLLSVLEAFANGQDFGQPLPGPDAQAPEELVLHLAVKVANQASLPLVDFIIQNGGHLDAKAADGNTALHYAALYNQPDCLKLLLKGRALVGTVNEAGETALDIARKKHHKECEELLEQAQAGTFAFPLHVDYSWVISTEPGSDSEEDEEEKRCLLKLPAQAHWASGRLDISNKTYETVASLGAATPQGESEDCPPPLPVKNSSRTLVQGCARHASGDRSEVSSLSSEAPETPESLGSPASSSSLMSPLEPGDPSQAPPNSEEGLREPPGTSRPSLTSGTTPSEMYLPVRFSSESTRSYRRGARSPEDGPSARQPLPRRNVPVGITEGDGSRTGSLPASSVQLLQD</sequence>
<gene>
    <name type="primary">ASAP3</name>
    <name type="synonym">DDEFL1</name>
    <name type="synonym">UPLC1</name>
</gene>
<organism>
    <name type="scientific">Homo sapiens</name>
    <name type="common">Human</name>
    <dbReference type="NCBI Taxonomy" id="9606"/>
    <lineage>
        <taxon>Eukaryota</taxon>
        <taxon>Metazoa</taxon>
        <taxon>Chordata</taxon>
        <taxon>Craniata</taxon>
        <taxon>Vertebrata</taxon>
        <taxon>Euteleostomi</taxon>
        <taxon>Mammalia</taxon>
        <taxon>Eutheria</taxon>
        <taxon>Euarchontoglires</taxon>
        <taxon>Primates</taxon>
        <taxon>Haplorrhini</taxon>
        <taxon>Catarrhini</taxon>
        <taxon>Hominidae</taxon>
        <taxon>Homo</taxon>
    </lineage>
</organism>
<proteinExistence type="evidence at protein level"/>
<comment type="function">
    <text evidence="5">Promotes cell proliferation.</text>
</comment>
<comment type="interaction">
    <interactant intactId="EBI-2609717">
        <id>Q8TDY4</id>
    </interactant>
    <interactant intactId="EBI-886">
        <id>P46108</id>
        <label>CRK</label>
    </interactant>
    <organismsDiffer>false</organismsDiffer>
    <experiments>6</experiments>
</comment>
<comment type="interaction">
    <interactant intactId="EBI-2609717">
        <id>Q8TDY4</id>
    </interactant>
    <interactant intactId="EBI-8744528">
        <id>Q86UT5</id>
        <label>NHERF4</label>
    </interactant>
    <organismsDiffer>false</organismsDiffer>
    <experiments>3</experiments>
</comment>
<comment type="interaction">
    <interactant intactId="EBI-2609717">
        <id>Q8TDY4</id>
    </interactant>
    <interactant intactId="EBI-12092811">
        <id>Q86UT5-3</id>
        <label>NHERF4</label>
    </interactant>
    <organismsDiffer>false</organismsDiffer>
    <experiments>3</experiments>
</comment>
<comment type="interaction">
    <interactant intactId="EBI-2609717">
        <id>Q8TDY4</id>
    </interactant>
    <interactant intactId="EBI-307352">
        <id>Q04864</id>
        <label>REL</label>
    </interactant>
    <organismsDiffer>false</organismsDiffer>
    <experiments>3</experiments>
</comment>
<comment type="interaction">
    <interactant intactId="EBI-2609717">
        <id>Q8TDY4</id>
    </interactant>
    <interactant intactId="EBI-10829018">
        <id>Q04864-2</id>
        <label>REL</label>
    </interactant>
    <organismsDiffer>false</organismsDiffer>
    <experiments>3</experiments>
</comment>
<comment type="interaction">
    <interactant intactId="EBI-2609717">
        <id>Q8TDY4</id>
    </interactant>
    <interactant intactId="EBI-13636688">
        <id>P15884-3</id>
        <label>TCF4</label>
    </interactant>
    <organismsDiffer>false</organismsDiffer>
    <experiments>3</experiments>
</comment>
<comment type="interaction">
    <interactant intactId="EBI-2609717">
        <id>Q8TDY4</id>
    </interactant>
    <interactant intactId="EBI-11139477">
        <id>Q96N21</id>
        <label>TEPSIN</label>
    </interactant>
    <organismsDiffer>false</organismsDiffer>
    <experiments>3</experiments>
</comment>
<comment type="interaction">
    <interactant intactId="EBI-2609717">
        <id>Q8TDY4</id>
    </interactant>
    <interactant intactId="EBI-717422">
        <id>Q12800</id>
        <label>TFCP2</label>
    </interactant>
    <organismsDiffer>false</organismsDiffer>
    <experiments>3</experiments>
</comment>
<comment type="interaction">
    <interactant intactId="EBI-2609717">
        <id>Q8TDY4</id>
    </interactant>
    <interactant intactId="EBI-10175863">
        <id>Q05086-2</id>
        <label>UBE3A</label>
    </interactant>
    <organismsDiffer>false</organismsDiffer>
    <experiments>3</experiments>
</comment>
<comment type="subcellular location">
    <subcellularLocation>
        <location evidence="5">Cytoplasm</location>
    </subcellularLocation>
</comment>
<comment type="alternative products">
    <event type="alternative splicing"/>
    <isoform>
        <id>Q8TDY4-1</id>
        <name>1</name>
        <sequence type="displayed"/>
    </isoform>
    <isoform>
        <id>Q8TDY4-2</id>
        <name>2</name>
        <sequence type="described" ref="VSP_018013"/>
    </isoform>
    <isoform>
        <id>Q8TDY4-3</id>
        <name>3</name>
        <sequence type="described" ref="VSP_039827"/>
    </isoform>
</comment>
<comment type="tissue specificity">
    <text evidence="5">Highly expressed in primary hepatocarcinoma. Detected in lung, liver and blood leukocytes.</text>
</comment>